<sequence length="2586" mass="280550">MGVIESPSSTTSGSAEEMAQAITGHEDSVLPVAIVGMGMRLPGGIHTPDELWGMLVEKRSTRCEIPPTRFSVDGFHSPSSKPGSIAMRHGHFLDDKDDLHRLDTSFFSMGMTEVSDIDPQQRMLLEVAYECMQSSGQTNWRGSNIGCYVGVWGEDWLDLHSKDLYDSGTYRVSGGHDFAISNRISYEYDLKGPSFTIKAGCSSSLIALHEAVRAIRAGDCDGAIVAGTNLVFSPTMSVAMTEQGVLSPDASCKTFDANANGYARGEAINAIFLKPLNNALREGDPIRALVRATSSNSDGKTPGMSMPSSESHEALIRRAYGEVFLDPKDTCFVEAHGTGTSVGDPLEATAIARVFGGSSDNKLYIGSVKPNLGHSEGASGVSSVMKAVLALENRTIPPNINFSTPNPKIPFSEMNMAVPVDAIPWPRDRPLRVSVNSFGIGGANAHCIIETLEEYLGRSLPNESQVAPIRNGNGSVQADSSSAVTSITAMKMEVRRKKRQSAVEAAGLVSNLRLVADSTKIRPSKALYVLSAANPTSLRQSVMDYQKYLASHKTDPVDVSYTLANRREHLSHRTYGVVTTESTNDTPIVPDFSPLSKTNNNSLPEINMIFTGQGAQWVGMGKELMDEYETFYNTIAYLGLVLSGLEHPPTWDLIRELSRPAESSNVGRAEFSQPLVCAVQVALVDLLRSWGITPAAVVGHSSGEMAAAYAAGAISSEEAITIAYYRGYVNQQYTRDGGMAAIGMGAQEVAPYLVEGVGVACENSPQSVTLSGDKGVLEEVCQKIKEQVPDCFVRQLKVNVAYHSHHMQDLGGLFENLLEGKVYSQSPTIPFFSSVTVQKITEPRSLDAAYWRQNLESPVRFTGAVKLLLEARASTGSKQVFVEIGPHSALSGPLRQIFKAHGRGKEAYVSAMIRGEDCTESLLKLAGELFCHGTSLQLSNVTADGDVVVDLPPYPWNHDREYWSESRVSKDWRFRKFPNHELLGSRTLESSSLQPEWRNLIRLDGIPWLRDHQVLNDVVFPCAGYLAMAVEAVRQVAGTSEIGGFTLKSVVVQSALVLTESKPVEVLTSLRPVRLTNTLDSAWWEFSIVAHNGTSWIKHCEGQVRPGQDAHQKTAVLPQSEPISQHYPRLVDNLYPELLRIGLRYGPSFRGLDNVSCVPNGKKAAAMLRETTVSESSYAIHPTTIDHCLQLFFPASCDGAFYRAEKLCVPTAIGRLYLADGKSCEVESARAEASAATNSGGSISGAATVVSKQNSTLLSLEDGKFSPLEMDLAEDGNADLVGTARLEWKPNLDFADMCSLVRPSHASMNDGPELDLVEQLTLLAILEIHERIDGAVTPGGHDHAHQHIPNFRGWIADQVTAAAEGRYRGVVADAREIASLERGARLSLMTNLRQQVLRTGAASAAVLIGRVVDHCEEIVKGELEGIELLQAEDGLTNYYNYVESRTDSIDFFATAGHTRPTLRVLEIGAGTGGGAQVILEGLTNGKERLFSTYAYTDISAGFFVAAQERFKAYKGLDFKVLDITKDPSEQGFESGSFDLIIAGNVIHATPTLNETLANVRKLLAPEGYLFLQELSPKMRMVNLIMGILPGWWLGAAEGRVEEPYLDPSQWDTVLKETGFSGVDSAIYDAPYPYHLNANIISRPAKESAPQPRAIRGRLTLLHHADDTNSSSITQLREVLDARGLETDMVVFHEHEELKAGEQDVIISLLELKKPFFSSISAAQLESFQRIVAKLGSIEMIWVTRPAQHGLSASDNPGFGLSLGLTRTLRSEQSLAITTLEIDQVNDESFKAVTNLAIKVLDHREGGSTESTRGATTMDPDREYVVENGVVKVARYHPVSLSQELASRASKPEAVTLEIGRMGLLQTLGWVPFPTSDPGYGEVTIEPRCAGLNFRDVLLCMGVVEATGVGIGLEGSGIITKVGAGVGKFQPGDPVFYLADNCFSTQITISAQRCAKIPSQLAFEDAATMPCVYATVIHSLLDVGGLRPGQSILIHSACGGIGIAALNLCRNFQGLEIYTTVGNEEKVQYLVDNFGLPRSRIFNSRDASFLYDVRAATQGRGVDLVLNSLSGDLLHASWQCVAPYGKMLEIGKRDFIGKARLEMDLFEANRSFIGIDLARFDSARCQKLLERTAAMIQTGIVQPIKPVKVFDASDAEGAFRYMQKGVHLGKIVVSIPPHSSTALPITPKPLQVKLNPEASYLLVGGLGGLGRAAATWMVESGARYLIFFSRSAGLSVRDQAFFQELASQGCTAQAVRGDVLNLADVELAMASAPPGKPIRGVLQMSMVLRDKPFADMSLEDWDTAVKPKVHGTWNLHLAAPKDLDFFFATGSISGSFGTPGQANYAAGNTYLTALFEHRRALGLPASVLQIGLIEDIGYLAKNPERAEALRAAGGFFLRTRQLLQGLNWALLSSDPHHPEYQLTIGLRSDKALSDPANRVIWKKDSRAALYHNQEISTDAGAGDDQGINAIRLLVASCEEDPGILEDPATVELVTNEIGKRVCMFMLRPVEEMDPTASLTSLGVDSLVTIEIRNWIKRTFGGVEVSTLEILNSGTIQGLARLTVDGLKARFAASEQTDGDAYLEMKAP</sequence>
<evidence type="ECO:0000255" key="1"/>
<evidence type="ECO:0000255" key="2">
    <source>
        <dbReference type="PROSITE-ProRule" id="PRU00258"/>
    </source>
</evidence>
<evidence type="ECO:0000255" key="3">
    <source>
        <dbReference type="PROSITE-ProRule" id="PRU01348"/>
    </source>
</evidence>
<evidence type="ECO:0000255" key="4">
    <source>
        <dbReference type="PROSITE-ProRule" id="PRU01363"/>
    </source>
</evidence>
<evidence type="ECO:0000269" key="5">
    <source>
    </source>
</evidence>
<evidence type="ECO:0000269" key="6">
    <source>
    </source>
</evidence>
<evidence type="ECO:0000269" key="7">
    <source>
    </source>
</evidence>
<evidence type="ECO:0000269" key="8">
    <source>
    </source>
</evidence>
<evidence type="ECO:0000269" key="9">
    <source>
    </source>
</evidence>
<evidence type="ECO:0000269" key="10">
    <source>
    </source>
</evidence>
<evidence type="ECO:0000303" key="11">
    <source>
    </source>
</evidence>
<evidence type="ECO:0000303" key="12">
    <source>
    </source>
</evidence>
<evidence type="ECO:0000305" key="13"/>
<evidence type="ECO:0000305" key="14">
    <source>
    </source>
</evidence>
<protein>
    <recommendedName>
        <fullName evidence="12">Highly reducing polyketide synthase FUM1</fullName>
        <shortName evidence="13">HR-PKS FUM1</shortName>
        <ecNumber evidence="5">2.3.1.-</ecNumber>
    </recommendedName>
    <alternativeName>
        <fullName evidence="12">Fumonisin biosynthesis cluster protein 1</fullName>
    </alternativeName>
</protein>
<gene>
    <name evidence="12" type="primary">FUM1</name>
    <name evidence="11" type="synonym">FUM5</name>
    <name type="ORF">FVEG_00316</name>
</gene>
<proteinExistence type="evidence at transcript level"/>
<accession>W7LKX1</accession>
<accession>Q9Y8A2</accession>
<feature type="chain" id="PRO_0000441141" description="Highly reducing polyketide synthase FUM1">
    <location>
        <begin position="1"/>
        <end position="2586"/>
    </location>
</feature>
<feature type="domain" description="Ketosynthase family 3 (KS3)" evidence="3">
    <location>
        <begin position="29"/>
        <end position="451"/>
    </location>
</feature>
<feature type="domain" description="PKS/mFAS DH" evidence="4">
    <location>
        <begin position="980"/>
        <end position="1274"/>
    </location>
</feature>
<feature type="domain" description="Carrier" evidence="2">
    <location>
        <begin position="2486"/>
        <end position="2565"/>
    </location>
</feature>
<feature type="region of interest" description="Malonyl-CoA:ACP transacylase (MAT) domain" evidence="1">
    <location>
        <begin position="609"/>
        <end position="928"/>
    </location>
</feature>
<feature type="region of interest" description="Dehydratase (DH) domain" evidence="1">
    <location>
        <begin position="980"/>
        <end position="1269"/>
    </location>
</feature>
<feature type="region of interest" description="N-terminal hotdog fold" evidence="4">
    <location>
        <begin position="980"/>
        <end position="1111"/>
    </location>
</feature>
<feature type="region of interest" description="C-terminal hotdog fold" evidence="4">
    <location>
        <begin position="1125"/>
        <end position="1274"/>
    </location>
</feature>
<feature type="region of interest" description="Methyltransferase (CMet) domain" evidence="1">
    <location>
        <begin position="1450"/>
        <end position="1627"/>
    </location>
</feature>
<feature type="region of interest" description="Enoyl reductase (ER) (ER) domain" evidence="1">
    <location>
        <begin position="1862"/>
        <end position="2172"/>
    </location>
</feature>
<feature type="region of interest" description="Ketoreductase (KR) domain" evidence="1">
    <location>
        <begin position="2197"/>
        <end position="2373"/>
    </location>
</feature>
<feature type="active site" description="For beta-ketoacyl synthase activity" evidence="3">
    <location>
        <position position="201"/>
    </location>
</feature>
<feature type="active site" description="For beta-ketoacyl synthase activity" evidence="3">
    <location>
        <position position="336"/>
    </location>
</feature>
<feature type="active site" description="For beta-ketoacyl synthase activity" evidence="3">
    <location>
        <position position="374"/>
    </location>
</feature>
<feature type="active site" description="Proton acceptor; for dehydratase activity" evidence="4">
    <location>
        <position position="1012"/>
    </location>
</feature>
<feature type="active site" description="Proton donor; for dehydratase activity" evidence="4">
    <location>
        <position position="1186"/>
    </location>
</feature>
<feature type="modified residue" description="O-(pantetheine 4'-phosphoryl)serine" evidence="2">
    <location>
        <position position="2524"/>
    </location>
</feature>
<feature type="sequence conflict" description="In Ref. 1; AAD43562." evidence="13" ref="1">
    <original>D</original>
    <variation>N</variation>
    <location>
        <position position="685"/>
    </location>
</feature>
<feature type="sequence conflict" description="In Ref. 1; AAD43562." evidence="13" ref="1">
    <original>A</original>
    <variation>V</variation>
    <location>
        <position position="741"/>
    </location>
</feature>
<feature type="sequence conflict" description="In Ref. 1; AAD43562." evidence="13" ref="1">
    <original>L</original>
    <variation>I</variation>
    <location>
        <position position="753"/>
    </location>
</feature>
<feature type="sequence conflict" description="In Ref. 1; AAD43562." evidence="13" ref="1">
    <original>D</original>
    <variation>N</variation>
    <location>
        <position position="917"/>
    </location>
</feature>
<feature type="sequence conflict" description="In Ref. 1; AAD43562." evidence="13" ref="1">
    <original>V</original>
    <variation>F</variation>
    <location>
        <position position="949"/>
    </location>
</feature>
<feature type="sequence conflict" description="In Ref. 1; AAD43562." evidence="13" ref="1">
    <original>G</original>
    <variation>S</variation>
    <location>
        <position position="1044"/>
    </location>
</feature>
<dbReference type="EC" id="2.3.1.-" evidence="5"/>
<dbReference type="EMBL" id="AF155773">
    <property type="protein sequence ID" value="AAD43562.2"/>
    <property type="molecule type" value="Genomic_DNA"/>
</dbReference>
<dbReference type="EMBL" id="CM000578">
    <property type="protein sequence ID" value="EWG36195.1"/>
    <property type="molecule type" value="Genomic_DNA"/>
</dbReference>
<dbReference type="RefSeq" id="XP_018742386.1">
    <property type="nucleotide sequence ID" value="XM_018886754.1"/>
</dbReference>
<dbReference type="SMR" id="W7LKX1"/>
<dbReference type="STRING" id="334819.W7LKX1"/>
<dbReference type="GeneID" id="30058694"/>
<dbReference type="KEGG" id="fvr:FVEG_00316"/>
<dbReference type="VEuPathDB" id="FungiDB:FVEG_00316"/>
<dbReference type="eggNOG" id="KOG1202">
    <property type="taxonomic scope" value="Eukaryota"/>
</dbReference>
<dbReference type="OrthoDB" id="33710at110618"/>
<dbReference type="PHI-base" id="PHI:255"/>
<dbReference type="Proteomes" id="UP000009096">
    <property type="component" value="Chromosome 1"/>
</dbReference>
<dbReference type="GO" id="GO:0004315">
    <property type="term" value="F:3-oxoacyl-[acyl-carrier-protein] synthase activity"/>
    <property type="evidence" value="ECO:0007669"/>
    <property type="project" value="InterPro"/>
</dbReference>
<dbReference type="GO" id="GO:0004312">
    <property type="term" value="F:fatty acid synthase activity"/>
    <property type="evidence" value="ECO:0007669"/>
    <property type="project" value="TreeGrafter"/>
</dbReference>
<dbReference type="GO" id="GO:0008168">
    <property type="term" value="F:methyltransferase activity"/>
    <property type="evidence" value="ECO:0007669"/>
    <property type="project" value="UniProtKB-KW"/>
</dbReference>
<dbReference type="GO" id="GO:0016491">
    <property type="term" value="F:oxidoreductase activity"/>
    <property type="evidence" value="ECO:0007669"/>
    <property type="project" value="UniProtKB-KW"/>
</dbReference>
<dbReference type="GO" id="GO:0031177">
    <property type="term" value="F:phosphopantetheine binding"/>
    <property type="evidence" value="ECO:0007669"/>
    <property type="project" value="InterPro"/>
</dbReference>
<dbReference type="GO" id="GO:0006633">
    <property type="term" value="P:fatty acid biosynthetic process"/>
    <property type="evidence" value="ECO:0007669"/>
    <property type="project" value="InterPro"/>
</dbReference>
<dbReference type="GO" id="GO:1900541">
    <property type="term" value="P:fumonisin biosynthetic process"/>
    <property type="evidence" value="ECO:0000315"/>
    <property type="project" value="GO_Central"/>
</dbReference>
<dbReference type="GO" id="GO:0032259">
    <property type="term" value="P:methylation"/>
    <property type="evidence" value="ECO:0007669"/>
    <property type="project" value="UniProtKB-KW"/>
</dbReference>
<dbReference type="CDD" id="cd02440">
    <property type="entry name" value="AdoMet_MTases"/>
    <property type="match status" value="1"/>
</dbReference>
<dbReference type="CDD" id="cd05195">
    <property type="entry name" value="enoyl_red"/>
    <property type="match status" value="1"/>
</dbReference>
<dbReference type="CDD" id="cd05274">
    <property type="entry name" value="KR_FAS_SDR_x"/>
    <property type="match status" value="1"/>
</dbReference>
<dbReference type="CDD" id="cd00833">
    <property type="entry name" value="PKS"/>
    <property type="match status" value="1"/>
</dbReference>
<dbReference type="Gene3D" id="3.30.70.3290">
    <property type="match status" value="1"/>
</dbReference>
<dbReference type="Gene3D" id="3.40.47.10">
    <property type="match status" value="1"/>
</dbReference>
<dbReference type="Gene3D" id="1.10.1200.10">
    <property type="entry name" value="ACP-like"/>
    <property type="match status" value="1"/>
</dbReference>
<dbReference type="Gene3D" id="3.40.366.10">
    <property type="entry name" value="Malonyl-Coenzyme A Acyl Carrier Protein, domain 2"/>
    <property type="match status" value="1"/>
</dbReference>
<dbReference type="Gene3D" id="3.90.180.10">
    <property type="entry name" value="Medium-chain alcohol dehydrogenases, catalytic domain"/>
    <property type="match status" value="1"/>
</dbReference>
<dbReference type="Gene3D" id="3.40.50.720">
    <property type="entry name" value="NAD(P)-binding Rossmann-like Domain"/>
    <property type="match status" value="1"/>
</dbReference>
<dbReference type="Gene3D" id="3.10.129.110">
    <property type="entry name" value="Polyketide synthase dehydratase"/>
    <property type="match status" value="1"/>
</dbReference>
<dbReference type="Gene3D" id="3.40.50.150">
    <property type="entry name" value="Vaccinia Virus protein VP39"/>
    <property type="match status" value="1"/>
</dbReference>
<dbReference type="InterPro" id="IPR001227">
    <property type="entry name" value="Ac_transferase_dom_sf"/>
</dbReference>
<dbReference type="InterPro" id="IPR036736">
    <property type="entry name" value="ACP-like_sf"/>
</dbReference>
<dbReference type="InterPro" id="IPR014043">
    <property type="entry name" value="Acyl_transferase_dom"/>
</dbReference>
<dbReference type="InterPro" id="IPR016035">
    <property type="entry name" value="Acyl_Trfase/lysoPLipase"/>
</dbReference>
<dbReference type="InterPro" id="IPR013154">
    <property type="entry name" value="ADH-like_N"/>
</dbReference>
<dbReference type="InterPro" id="IPR011032">
    <property type="entry name" value="GroES-like_sf"/>
</dbReference>
<dbReference type="InterPro" id="IPR018201">
    <property type="entry name" value="Ketoacyl_synth_AS"/>
</dbReference>
<dbReference type="InterPro" id="IPR014031">
    <property type="entry name" value="Ketoacyl_synth_C"/>
</dbReference>
<dbReference type="InterPro" id="IPR014030">
    <property type="entry name" value="Ketoacyl_synth_N"/>
</dbReference>
<dbReference type="InterPro" id="IPR016036">
    <property type="entry name" value="Malonyl_transacylase_ACP-bd"/>
</dbReference>
<dbReference type="InterPro" id="IPR013217">
    <property type="entry name" value="Methyltransf_12"/>
</dbReference>
<dbReference type="InterPro" id="IPR036291">
    <property type="entry name" value="NAD(P)-bd_dom_sf"/>
</dbReference>
<dbReference type="InterPro" id="IPR032821">
    <property type="entry name" value="PKS_assoc"/>
</dbReference>
<dbReference type="InterPro" id="IPR020841">
    <property type="entry name" value="PKS_Beta-ketoAc_synthase_dom"/>
</dbReference>
<dbReference type="InterPro" id="IPR042104">
    <property type="entry name" value="PKS_dehydratase_sf"/>
</dbReference>
<dbReference type="InterPro" id="IPR020807">
    <property type="entry name" value="PKS_DH"/>
</dbReference>
<dbReference type="InterPro" id="IPR049551">
    <property type="entry name" value="PKS_DH_C"/>
</dbReference>
<dbReference type="InterPro" id="IPR049552">
    <property type="entry name" value="PKS_DH_N"/>
</dbReference>
<dbReference type="InterPro" id="IPR020843">
    <property type="entry name" value="PKS_ER"/>
</dbReference>
<dbReference type="InterPro" id="IPR013968">
    <property type="entry name" value="PKS_KR"/>
</dbReference>
<dbReference type="InterPro" id="IPR049900">
    <property type="entry name" value="PKS_mFAS_DH"/>
</dbReference>
<dbReference type="InterPro" id="IPR050091">
    <property type="entry name" value="PKS_NRPS_Biosynth_Enz"/>
</dbReference>
<dbReference type="InterPro" id="IPR020806">
    <property type="entry name" value="PKS_PP-bd"/>
</dbReference>
<dbReference type="InterPro" id="IPR009081">
    <property type="entry name" value="PP-bd_ACP"/>
</dbReference>
<dbReference type="InterPro" id="IPR006162">
    <property type="entry name" value="Ppantetheine_attach_site"/>
</dbReference>
<dbReference type="InterPro" id="IPR029063">
    <property type="entry name" value="SAM-dependent_MTases_sf"/>
</dbReference>
<dbReference type="InterPro" id="IPR016039">
    <property type="entry name" value="Thiolase-like"/>
</dbReference>
<dbReference type="PANTHER" id="PTHR43775">
    <property type="entry name" value="FATTY ACID SYNTHASE"/>
    <property type="match status" value="1"/>
</dbReference>
<dbReference type="PANTHER" id="PTHR43775:SF49">
    <property type="entry name" value="SYNTHASE, PUTATIVE (JCVI)-RELATED"/>
    <property type="match status" value="1"/>
</dbReference>
<dbReference type="Pfam" id="PF00698">
    <property type="entry name" value="Acyl_transf_1"/>
    <property type="match status" value="1"/>
</dbReference>
<dbReference type="Pfam" id="PF08240">
    <property type="entry name" value="ADH_N"/>
    <property type="match status" value="1"/>
</dbReference>
<dbReference type="Pfam" id="PF13602">
    <property type="entry name" value="ADH_zinc_N_2"/>
    <property type="match status" value="1"/>
</dbReference>
<dbReference type="Pfam" id="PF22621">
    <property type="entry name" value="CurL-like_PKS_C"/>
    <property type="match status" value="1"/>
</dbReference>
<dbReference type="Pfam" id="PF16197">
    <property type="entry name" value="KAsynt_C_assoc"/>
    <property type="match status" value="1"/>
</dbReference>
<dbReference type="Pfam" id="PF00109">
    <property type="entry name" value="ketoacyl-synt"/>
    <property type="match status" value="1"/>
</dbReference>
<dbReference type="Pfam" id="PF02801">
    <property type="entry name" value="Ketoacyl-synt_C"/>
    <property type="match status" value="1"/>
</dbReference>
<dbReference type="Pfam" id="PF08659">
    <property type="entry name" value="KR"/>
    <property type="match status" value="1"/>
</dbReference>
<dbReference type="Pfam" id="PF08242">
    <property type="entry name" value="Methyltransf_12"/>
    <property type="match status" value="1"/>
</dbReference>
<dbReference type="Pfam" id="PF21089">
    <property type="entry name" value="PKS_DH_N"/>
    <property type="match status" value="1"/>
</dbReference>
<dbReference type="Pfam" id="PF00550">
    <property type="entry name" value="PP-binding"/>
    <property type="match status" value="1"/>
</dbReference>
<dbReference type="Pfam" id="PF14765">
    <property type="entry name" value="PS-DH"/>
    <property type="match status" value="1"/>
</dbReference>
<dbReference type="SMART" id="SM00827">
    <property type="entry name" value="PKS_AT"/>
    <property type="match status" value="1"/>
</dbReference>
<dbReference type="SMART" id="SM00826">
    <property type="entry name" value="PKS_DH"/>
    <property type="match status" value="1"/>
</dbReference>
<dbReference type="SMART" id="SM00829">
    <property type="entry name" value="PKS_ER"/>
    <property type="match status" value="1"/>
</dbReference>
<dbReference type="SMART" id="SM00822">
    <property type="entry name" value="PKS_KR"/>
    <property type="match status" value="1"/>
</dbReference>
<dbReference type="SMART" id="SM00825">
    <property type="entry name" value="PKS_KS"/>
    <property type="match status" value="1"/>
</dbReference>
<dbReference type="SMART" id="SM00823">
    <property type="entry name" value="PKS_PP"/>
    <property type="match status" value="1"/>
</dbReference>
<dbReference type="SUPFAM" id="SSF47336">
    <property type="entry name" value="ACP-like"/>
    <property type="match status" value="1"/>
</dbReference>
<dbReference type="SUPFAM" id="SSF52151">
    <property type="entry name" value="FabD/lysophospholipase-like"/>
    <property type="match status" value="1"/>
</dbReference>
<dbReference type="SUPFAM" id="SSF50129">
    <property type="entry name" value="GroES-like"/>
    <property type="match status" value="1"/>
</dbReference>
<dbReference type="SUPFAM" id="SSF51735">
    <property type="entry name" value="NAD(P)-binding Rossmann-fold domains"/>
    <property type="match status" value="2"/>
</dbReference>
<dbReference type="SUPFAM" id="SSF55048">
    <property type="entry name" value="Probable ACP-binding domain of malonyl-CoA ACP transacylase"/>
    <property type="match status" value="1"/>
</dbReference>
<dbReference type="SUPFAM" id="SSF53335">
    <property type="entry name" value="S-adenosyl-L-methionine-dependent methyltransferases"/>
    <property type="match status" value="1"/>
</dbReference>
<dbReference type="SUPFAM" id="SSF53901">
    <property type="entry name" value="Thiolase-like"/>
    <property type="match status" value="1"/>
</dbReference>
<dbReference type="PROSITE" id="PS50075">
    <property type="entry name" value="CARRIER"/>
    <property type="match status" value="1"/>
</dbReference>
<dbReference type="PROSITE" id="PS00606">
    <property type="entry name" value="KS3_1"/>
    <property type="match status" value="1"/>
</dbReference>
<dbReference type="PROSITE" id="PS52004">
    <property type="entry name" value="KS3_2"/>
    <property type="match status" value="1"/>
</dbReference>
<dbReference type="PROSITE" id="PS00012">
    <property type="entry name" value="PHOSPHOPANTETHEINE"/>
    <property type="match status" value="2"/>
</dbReference>
<dbReference type="PROSITE" id="PS52019">
    <property type="entry name" value="PKS_MFAS_DH"/>
    <property type="match status" value="1"/>
</dbReference>
<keyword id="KW-0012">Acyltransferase</keyword>
<keyword id="KW-0489">Methyltransferase</keyword>
<keyword id="KW-0511">Multifunctional enzyme</keyword>
<keyword id="KW-0521">NADP</keyword>
<keyword id="KW-0560">Oxidoreductase</keyword>
<keyword id="KW-0596">Phosphopantetheine</keyword>
<keyword id="KW-0597">Phosphoprotein</keyword>
<keyword id="KW-1185">Reference proteome</keyword>
<keyword id="KW-0808">Transferase</keyword>
<organism>
    <name type="scientific">Gibberella moniliformis (strain M3125 / FGSC 7600)</name>
    <name type="common">Maize ear and stalk rot fungus</name>
    <name type="synonym">Fusarium verticillioides</name>
    <dbReference type="NCBI Taxonomy" id="334819"/>
    <lineage>
        <taxon>Eukaryota</taxon>
        <taxon>Fungi</taxon>
        <taxon>Dikarya</taxon>
        <taxon>Ascomycota</taxon>
        <taxon>Pezizomycotina</taxon>
        <taxon>Sordariomycetes</taxon>
        <taxon>Hypocreomycetidae</taxon>
        <taxon>Hypocreales</taxon>
        <taxon>Nectriaceae</taxon>
        <taxon>Fusarium</taxon>
        <taxon>Fusarium fujikuroi species complex</taxon>
    </lineage>
</organism>
<name>FUM1_GIBM7</name>
<comment type="function">
    <text evidence="5 6 7 8 14">Highly reducing polyketide synthase; part of the gene cluster that mediates the biosynthesis of fumonisins B1 (FB1), B2 (FB2), B3 (FB3), and B4 (FB4), which are carcinogenic mycotoxins (PubMed:10413619, PubMed:12423021, PubMed:12620260, PubMed:15137825). The biosynthesis starts with the FUM1-catalyzed carbon chain assembly from one molecule of acetyl-CoA, eight molecules of malonyl-CoA, and two molecules of methionine (in S-adenosyl form) (PubMed:10413619, PubMed:12423021, PubMed:12620260, PubMed:15137825). The C18 polyketide chain is released from the enzyme by a nucleophilic attack of a carbanion, which is derived from R-carbon of alanine by decarboxylation, on the carbonyl carbon of polyketide acyl chain. This step is catalyzed by the pyridoxal 5'-phosphate-dependent aminoacyl transferase FUM8. The resultant 3-keto intermediate is then stereospecifically reduced to a 3-hydroxyl product by reductase FUM13. Subsequent oxidations at C-10 by the cytochrome P450 monooxygenase FUM2, C-14 and C-15 by FUM6, FUM12 or FUM15, tricarballylic esterification of the hydroxyl groups on C-14 and C-15 by acyltransferase FUM14, and C-5 hydroxylation by 2-keto-glutarate-dependent dioxygenase FUM3 furnish the biosynthesis of fumonisins. The tricarballylic moieties are most likely derived from the citric acid cycle, and their addition to the carbon backbone may involve FUM7, FUM10, FUM11 and FUM14 (Probable).</text>
</comment>
<comment type="pathway">
    <text evidence="5 6 7 8">Mycotoxin biosynthesis.</text>
</comment>
<comment type="induction">
    <text evidence="9 10">Expression is positively regulated by the fumonisin gene cluster-specific transcription regulator FUM21 (PubMed:17483290). Expression is increased under histone deacetylase (HDAC)-inhibiting conditions (PubMed:22117026). Expression is strongly reduced by benomyl (PubMed:25217721).</text>
</comment>
<comment type="disruption phenotype">
    <text evidence="5 6 8">Impairs the production of fumonisins but does not affect maize ear rot and ear infection (PubMed:10413619, PubMed:12423021, PubMed:15137825).</text>
</comment>
<reference key="1">
    <citation type="journal article" date="1999" name="Fungal Genet. Biol.">
        <title>A polyketide synthase gene required for biosynthesis of fumonisin mycotoxins in Gibberella fujikuroi mating population A.</title>
        <authorList>
            <person name="Proctor R.H."/>
            <person name="Desjardins A.E."/>
            <person name="Plattner R.D."/>
            <person name="Hohn T.M."/>
        </authorList>
    </citation>
    <scope>NUCLEOTIDE SEQUENCE [GENOMIC DNA]</scope>
    <scope>DOMAIN</scope>
    <scope>FUNCTION</scope>
    <scope>DISRUPTION PHENOTYPE</scope>
    <scope>PATHWAY</scope>
    <source>
        <strain>M3125 / FGSC 7600</strain>
    </source>
</reference>
<reference key="2">
    <citation type="journal article" date="2002" name="Mol. Plant Microbe Interact.">
        <title>FUM1--a gene required for fumonisin biosynthesis but not for maize ear rot and ear infection by Gibberella moniliformis in field tests.</title>
        <authorList>
            <person name="Desjardins A.E."/>
            <person name="Munkvold G.P."/>
            <person name="Plattner R.D."/>
            <person name="Proctor R.H."/>
        </authorList>
    </citation>
    <scope>NUCLEOTIDE SEQUENCE [GENOMIC DNA]</scope>
    <scope>FUNCTION</scope>
    <scope>DISRUPTION PHENOTYPE</scope>
    <source>
        <strain>M3125 / FGSC 7600</strain>
    </source>
</reference>
<reference key="3">
    <citation type="journal article" date="2003" name="Fungal Genet. Biol.">
        <title>Co-expression of 15 contiguous genes delineates a fumonisin biosynthetic gene cluster in Gibberella moniliformis.</title>
        <authorList>
            <person name="Proctor R.H."/>
            <person name="Brown D.W."/>
            <person name="Plattner R.D."/>
            <person name="Desjardins A.E."/>
        </authorList>
    </citation>
    <scope>NUCLEOTIDE SEQUENCE [GENOMIC DNA]</scope>
    <scope>FUNCTION</scope>
    <scope>PATHWAY</scope>
    <source>
        <strain>M3125 / FGSC 7600</strain>
    </source>
</reference>
<reference key="4">
    <citation type="journal article" date="2010" name="Nature">
        <title>Comparative genomics reveals mobile pathogenicity chromosomes in Fusarium.</title>
        <authorList>
            <person name="Ma L.-J."/>
            <person name="van der Does H.C."/>
            <person name="Borkovich K.A."/>
            <person name="Coleman J.J."/>
            <person name="Daboussi M.-J."/>
            <person name="Di Pietro A."/>
            <person name="Dufresne M."/>
            <person name="Freitag M."/>
            <person name="Grabherr M."/>
            <person name="Henrissat B."/>
            <person name="Houterman P.M."/>
            <person name="Kang S."/>
            <person name="Shim W.-B."/>
            <person name="Woloshuk C."/>
            <person name="Xie X."/>
            <person name="Xu J.-R."/>
            <person name="Antoniw J."/>
            <person name="Baker S.E."/>
            <person name="Bluhm B.H."/>
            <person name="Breakspear A."/>
            <person name="Brown D.W."/>
            <person name="Butchko R.A.E."/>
            <person name="Chapman S."/>
            <person name="Coulson R."/>
            <person name="Coutinho P.M."/>
            <person name="Danchin E.G.J."/>
            <person name="Diener A."/>
            <person name="Gale L.R."/>
            <person name="Gardiner D.M."/>
            <person name="Goff S."/>
            <person name="Hammond-Kosack K.E."/>
            <person name="Hilburn K."/>
            <person name="Hua-Van A."/>
            <person name="Jonkers W."/>
            <person name="Kazan K."/>
            <person name="Kodira C.D."/>
            <person name="Koehrsen M."/>
            <person name="Kumar L."/>
            <person name="Lee Y.-H."/>
            <person name="Li L."/>
            <person name="Manners J.M."/>
            <person name="Miranda-Saavedra D."/>
            <person name="Mukherjee M."/>
            <person name="Park G."/>
            <person name="Park J."/>
            <person name="Park S.-Y."/>
            <person name="Proctor R.H."/>
            <person name="Regev A."/>
            <person name="Ruiz-Roldan M.C."/>
            <person name="Sain D."/>
            <person name="Sakthikumar S."/>
            <person name="Sykes S."/>
            <person name="Schwartz D.C."/>
            <person name="Turgeon B.G."/>
            <person name="Wapinski I."/>
            <person name="Yoder O."/>
            <person name="Young S."/>
            <person name="Zeng Q."/>
            <person name="Zhou S."/>
            <person name="Galagan J."/>
            <person name="Cuomo C.A."/>
            <person name="Kistler H.C."/>
            <person name="Rep M."/>
        </authorList>
    </citation>
    <scope>NUCLEOTIDE SEQUENCE [LARGE SCALE GENOMIC DNA]</scope>
    <source>
        <strain>M3125 / FGSC 7600</strain>
    </source>
</reference>
<reference key="5">
    <citation type="journal article" date="1996" name="Adv. Exp. Med. Biol.">
        <title>Genetic and biochemical aspects of fumonisin production.</title>
        <authorList>
            <person name="Desjardins A.E."/>
            <person name="Plattner R.D."/>
            <person name="Proctor R.H."/>
        </authorList>
    </citation>
    <scope>IDENTIFICATION</scope>
</reference>
<reference key="6">
    <citation type="journal article" date="2004" name="J. Agric. Food Chem.">
        <title>Determining the biosynthetic sequence in the early steps of the fumonisin pathway by use of three gene-disruption mutants of Fusarium verticillioides.</title>
        <authorList>
            <person name="Bojja R.S."/>
            <person name="Cerny R.L."/>
            <person name="Proctor R.H."/>
            <person name="Du L."/>
        </authorList>
    </citation>
    <scope>FUNCTION</scope>
    <scope>DISRUPTION PHENOTYPE</scope>
    <scope>PATHWAY</scope>
</reference>
<reference key="7">
    <citation type="journal article" date="2007" name="Eukaryot. Cell">
        <title>The Fusarium verticillioides FUM gene cluster encodes a Zn(II)2Cys6 protein that affects FUM gene expression and fumonisin production.</title>
        <authorList>
            <person name="Brown D.W."/>
            <person name="Butchko R.A."/>
            <person name="Busman M."/>
            <person name="Proctor R.H."/>
        </authorList>
    </citation>
    <scope>INDUCTION</scope>
    <source>
        <strain>M3125 / FGSC 7600</strain>
    </source>
</reference>
<reference key="8">
    <citation type="journal article" date="2012" name="Eukaryot. Cell">
        <title>Transcription of genes in the biosynthetic pathway for fumonisin mycotoxins is epigenetically and differentially regulated in the fungal maize pathogen Fusarium verticillioides.</title>
        <authorList>
            <person name="Visentin I."/>
            <person name="Montis V."/>
            <person name="Doell K."/>
            <person name="Alabouvette C."/>
            <person name="Tamietti G."/>
            <person name="Karlovsky P."/>
            <person name="Cardinale F."/>
        </authorList>
    </citation>
    <scope>INDUCTION</scope>
</reference>
<reference key="9">
    <citation type="journal article" date="2014" name="Int. J. Food Microbiol.">
        <title>Combined effects of benomyl and environmental factors on growth and expression of the fumonisin biosynthetic genes FUM1 and FUM19 by Fusarium verticillioides.</title>
        <authorList>
            <person name="Cruz A."/>
            <person name="Marin P."/>
            <person name="Magan N."/>
            <person name="Gonzalez-Jaen M.T."/>
        </authorList>
    </citation>
    <scope>INDUCTION</scope>
</reference>